<gene>
    <name evidence="1" type="primary">dapH</name>
    <name type="ordered locus">EAT1b_2264</name>
</gene>
<keyword id="KW-0012">Acyltransferase</keyword>
<keyword id="KW-0028">Amino-acid biosynthesis</keyword>
<keyword id="KW-0220">Diaminopimelate biosynthesis</keyword>
<keyword id="KW-0457">Lysine biosynthesis</keyword>
<keyword id="KW-0677">Repeat</keyword>
<keyword id="KW-0808">Transferase</keyword>
<proteinExistence type="inferred from homology"/>
<dbReference type="EC" id="2.3.1.89" evidence="1"/>
<dbReference type="EMBL" id="CP001615">
    <property type="protein sequence ID" value="ACQ71186.1"/>
    <property type="molecule type" value="Genomic_DNA"/>
</dbReference>
<dbReference type="SMR" id="C4L2D4"/>
<dbReference type="STRING" id="360911.EAT1b_2264"/>
<dbReference type="KEGG" id="eat:EAT1b_2264"/>
<dbReference type="eggNOG" id="COG2171">
    <property type="taxonomic scope" value="Bacteria"/>
</dbReference>
<dbReference type="HOGENOM" id="CLU_103751_0_0_9"/>
<dbReference type="OrthoDB" id="9788080at2"/>
<dbReference type="UniPathway" id="UPA00034">
    <property type="reaction ID" value="UER00022"/>
</dbReference>
<dbReference type="Proteomes" id="UP000000716">
    <property type="component" value="Chromosome"/>
</dbReference>
<dbReference type="GO" id="GO:0047200">
    <property type="term" value="F:tetrahydrodipicolinate N-acetyltransferase activity"/>
    <property type="evidence" value="ECO:0007669"/>
    <property type="project" value="UniProtKB-EC"/>
</dbReference>
<dbReference type="GO" id="GO:0019877">
    <property type="term" value="P:diaminopimelate biosynthetic process"/>
    <property type="evidence" value="ECO:0007669"/>
    <property type="project" value="UniProtKB-UniRule"/>
</dbReference>
<dbReference type="GO" id="GO:0009089">
    <property type="term" value="P:lysine biosynthetic process via diaminopimelate"/>
    <property type="evidence" value="ECO:0007669"/>
    <property type="project" value="UniProtKB-UniRule"/>
</dbReference>
<dbReference type="CDD" id="cd03350">
    <property type="entry name" value="LbH_THP_succinylT"/>
    <property type="match status" value="1"/>
</dbReference>
<dbReference type="Gene3D" id="2.160.10.10">
    <property type="entry name" value="Hexapeptide repeat proteins"/>
    <property type="match status" value="1"/>
</dbReference>
<dbReference type="Gene3D" id="3.30.70.250">
    <property type="entry name" value="Malonyl-CoA ACP transacylase, ACP-binding"/>
    <property type="match status" value="1"/>
</dbReference>
<dbReference type="HAMAP" id="MF_01691">
    <property type="entry name" value="DapH"/>
    <property type="match status" value="1"/>
</dbReference>
<dbReference type="InterPro" id="IPR019873">
    <property type="entry name" value="DapH"/>
</dbReference>
<dbReference type="InterPro" id="IPR013710">
    <property type="entry name" value="DapH_N"/>
</dbReference>
<dbReference type="InterPro" id="IPR001451">
    <property type="entry name" value="Hexapep"/>
</dbReference>
<dbReference type="InterPro" id="IPR018357">
    <property type="entry name" value="Hexapep_transf_CS"/>
</dbReference>
<dbReference type="InterPro" id="IPR050179">
    <property type="entry name" value="Trans_hexapeptide_repeat"/>
</dbReference>
<dbReference type="InterPro" id="IPR011004">
    <property type="entry name" value="Trimer_LpxA-like_sf"/>
</dbReference>
<dbReference type="NCBIfam" id="TIGR03532">
    <property type="entry name" value="DapD_Ac"/>
    <property type="match status" value="1"/>
</dbReference>
<dbReference type="PANTHER" id="PTHR43300:SF10">
    <property type="entry name" value="2,3,4,5-TETRAHYDROPYRIDINE-2,6-DICARBOXYLATE N-ACETYLTRANSFERASE"/>
    <property type="match status" value="1"/>
</dbReference>
<dbReference type="PANTHER" id="PTHR43300">
    <property type="entry name" value="ACETYLTRANSFERASE"/>
    <property type="match status" value="1"/>
</dbReference>
<dbReference type="Pfam" id="PF08503">
    <property type="entry name" value="DapH_N"/>
    <property type="match status" value="1"/>
</dbReference>
<dbReference type="Pfam" id="PF00132">
    <property type="entry name" value="Hexapep"/>
    <property type="match status" value="1"/>
</dbReference>
<dbReference type="Pfam" id="PF14602">
    <property type="entry name" value="Hexapep_2"/>
    <property type="match status" value="1"/>
</dbReference>
<dbReference type="SUPFAM" id="SSF51161">
    <property type="entry name" value="Trimeric LpxA-like enzymes"/>
    <property type="match status" value="1"/>
</dbReference>
<dbReference type="PROSITE" id="PS00101">
    <property type="entry name" value="HEXAPEP_TRANSFERASES"/>
    <property type="match status" value="1"/>
</dbReference>
<protein>
    <recommendedName>
        <fullName evidence="1">2,3,4,5-tetrahydropyridine-2,6-dicarboxylate N-acetyltransferase</fullName>
        <ecNumber evidence="1">2.3.1.89</ecNumber>
    </recommendedName>
    <alternativeName>
        <fullName evidence="1">Tetrahydrodipicolinate N-acetyltransferase</fullName>
        <shortName evidence="1">THP acetyltransferase</shortName>
        <shortName evidence="1">Tetrahydropicolinate acetylase</shortName>
    </alternativeName>
</protein>
<evidence type="ECO:0000255" key="1">
    <source>
        <dbReference type="HAMAP-Rule" id="MF_01691"/>
    </source>
</evidence>
<reference key="1">
    <citation type="journal article" date="2011" name="J. Bacteriol.">
        <title>Complete genome sequence of the Thermophilic Bacterium Exiguobacterium sp. AT1b.</title>
        <authorList>
            <person name="Vishnivetskaya T.A."/>
            <person name="Lucas S."/>
            <person name="Copeland A."/>
            <person name="Lapidus A."/>
            <person name="Glavina del Rio T."/>
            <person name="Dalin E."/>
            <person name="Tice H."/>
            <person name="Bruce D.C."/>
            <person name="Goodwin L.A."/>
            <person name="Pitluck S."/>
            <person name="Saunders E."/>
            <person name="Brettin T."/>
            <person name="Detter C."/>
            <person name="Han C."/>
            <person name="Larimer F."/>
            <person name="Land M.L."/>
            <person name="Hauser L.J."/>
            <person name="Kyrpides N.C."/>
            <person name="Ovchinnikova G."/>
            <person name="Kathariou S."/>
            <person name="Ramaley R.F."/>
            <person name="Rodrigues D.F."/>
            <person name="Hendrix C."/>
            <person name="Richardson P."/>
            <person name="Tiedje J.M."/>
        </authorList>
    </citation>
    <scope>NUCLEOTIDE SEQUENCE [LARGE SCALE GENOMIC DNA]</scope>
    <source>
        <strain>ATCC BAA-1283 / AT1b</strain>
    </source>
</reference>
<sequence length="235" mass="24701">MLLTNAYEIAQYIKDAKKETPVKLYVNGQLAGLEIEEAKAFGTDESKLFLTTAERAAAFLEANASVITDSHLEYDRRNSAVPMLDTTRLNARIEPGSFIRDHVQIGNNAVVMMGAVVNIGAVIGDGSMVDMNAVIGARGTLGKNVHLGAGAVVAGVLEPPSKDPVIIEDGVMIGANAVILEGVRVGENAVVAAGSVVTQDVPPGVVVAGTPARIIKQKDEKTSEKTQLVDDLRSL</sequence>
<organism>
    <name type="scientific">Exiguobacterium sp. (strain ATCC BAA-1283 / AT1b)</name>
    <dbReference type="NCBI Taxonomy" id="360911"/>
    <lineage>
        <taxon>Bacteria</taxon>
        <taxon>Bacillati</taxon>
        <taxon>Bacillota</taxon>
        <taxon>Bacilli</taxon>
        <taxon>Bacillales</taxon>
        <taxon>Bacillales Family XII. Incertae Sedis</taxon>
        <taxon>Exiguobacterium</taxon>
    </lineage>
</organism>
<feature type="chain" id="PRO_1000215928" description="2,3,4,5-tetrahydropyridine-2,6-dicarboxylate N-acetyltransferase">
    <location>
        <begin position="1"/>
        <end position="235"/>
    </location>
</feature>
<name>DAPH_EXISA</name>
<accession>C4L2D4</accession>
<comment type="function">
    <text evidence="1">Catalyzes the transfer of an acetyl group from acetyl-CoA to tetrahydrodipicolinate.</text>
</comment>
<comment type="catalytic activity">
    <reaction evidence="1">
        <text>(S)-2,3,4,5-tetrahydrodipicolinate + acetyl-CoA + H2O = L-2-acetamido-6-oxoheptanedioate + CoA</text>
        <dbReference type="Rhea" id="RHEA:13085"/>
        <dbReference type="ChEBI" id="CHEBI:15377"/>
        <dbReference type="ChEBI" id="CHEBI:16845"/>
        <dbReference type="ChEBI" id="CHEBI:57287"/>
        <dbReference type="ChEBI" id="CHEBI:57288"/>
        <dbReference type="ChEBI" id="CHEBI:58117"/>
        <dbReference type="EC" id="2.3.1.89"/>
    </reaction>
</comment>
<comment type="pathway">
    <text evidence="1">Amino-acid biosynthesis; L-lysine biosynthesis via DAP pathway; LL-2,6-diaminopimelate from (S)-tetrahydrodipicolinate (acetylase route): step 1/3.</text>
</comment>
<comment type="similarity">
    <text evidence="1">Belongs to the transferase hexapeptide repeat family. DapH subfamily.</text>
</comment>